<reference key="1">
    <citation type="journal article" date="2003" name="Appl. Microbiol. Biotechnol.">
        <title>The Corynebacterium glutamicum genome: features and impacts on biotechnological processes.</title>
        <authorList>
            <person name="Ikeda M."/>
            <person name="Nakagawa S."/>
        </authorList>
    </citation>
    <scope>NUCLEOTIDE SEQUENCE [LARGE SCALE GENOMIC DNA]</scope>
    <source>
        <strain>ATCC 13032 / DSM 20300 / JCM 1318 / BCRC 11384 / CCUG 27702 / LMG 3730 / NBRC 12168 / NCIMB 10025 / NRRL B-2784 / 534</strain>
    </source>
</reference>
<reference key="2">
    <citation type="journal article" date="2003" name="J. Biotechnol.">
        <title>The complete Corynebacterium glutamicum ATCC 13032 genome sequence and its impact on the production of L-aspartate-derived amino acids and vitamins.</title>
        <authorList>
            <person name="Kalinowski J."/>
            <person name="Bathe B."/>
            <person name="Bartels D."/>
            <person name="Bischoff N."/>
            <person name="Bott M."/>
            <person name="Burkovski A."/>
            <person name="Dusch N."/>
            <person name="Eggeling L."/>
            <person name="Eikmanns B.J."/>
            <person name="Gaigalat L."/>
            <person name="Goesmann A."/>
            <person name="Hartmann M."/>
            <person name="Huthmacher K."/>
            <person name="Kraemer R."/>
            <person name="Linke B."/>
            <person name="McHardy A.C."/>
            <person name="Meyer F."/>
            <person name="Moeckel B."/>
            <person name="Pfefferle W."/>
            <person name="Puehler A."/>
            <person name="Rey D.A."/>
            <person name="Rueckert C."/>
            <person name="Rupp O."/>
            <person name="Sahm H."/>
            <person name="Wendisch V.F."/>
            <person name="Wiegraebe I."/>
            <person name="Tauch A."/>
        </authorList>
    </citation>
    <scope>NUCLEOTIDE SEQUENCE [LARGE SCALE GENOMIC DNA]</scope>
    <source>
        <strain>ATCC 13032 / DSM 20300 / JCM 1318 / BCRC 11384 / CCUG 27702 / LMG 3730 / NBRC 12168 / NCIMB 10025 / NRRL B-2784 / 534</strain>
    </source>
</reference>
<comment type="function">
    <text evidence="1">Methylates the class 1 translation termination release factors RF1/PrfA and RF2/PrfB on the glutamine residue of the universally conserved GGQ motif.</text>
</comment>
<comment type="catalytic activity">
    <reaction evidence="1">
        <text>L-glutaminyl-[peptide chain release factor] + S-adenosyl-L-methionine = N(5)-methyl-L-glutaminyl-[peptide chain release factor] + S-adenosyl-L-homocysteine + H(+)</text>
        <dbReference type="Rhea" id="RHEA:42896"/>
        <dbReference type="Rhea" id="RHEA-COMP:10271"/>
        <dbReference type="Rhea" id="RHEA-COMP:10272"/>
        <dbReference type="ChEBI" id="CHEBI:15378"/>
        <dbReference type="ChEBI" id="CHEBI:30011"/>
        <dbReference type="ChEBI" id="CHEBI:57856"/>
        <dbReference type="ChEBI" id="CHEBI:59789"/>
        <dbReference type="ChEBI" id="CHEBI:61891"/>
        <dbReference type="EC" id="2.1.1.297"/>
    </reaction>
</comment>
<comment type="similarity">
    <text evidence="1">Belongs to the protein N5-glutamine methyltransferase family. PrmC subfamily.</text>
</comment>
<evidence type="ECO:0000255" key="1">
    <source>
        <dbReference type="HAMAP-Rule" id="MF_02126"/>
    </source>
</evidence>
<organism>
    <name type="scientific">Corynebacterium glutamicum (strain ATCC 13032 / DSM 20300 / JCM 1318 / BCRC 11384 / CCUG 27702 / LMG 3730 / NBRC 12168 / NCIMB 10025 / NRRL B-2784 / 534)</name>
    <dbReference type="NCBI Taxonomy" id="196627"/>
    <lineage>
        <taxon>Bacteria</taxon>
        <taxon>Bacillati</taxon>
        <taxon>Actinomycetota</taxon>
        <taxon>Actinomycetes</taxon>
        <taxon>Mycobacteriales</taxon>
        <taxon>Corynebacteriaceae</taxon>
        <taxon>Corynebacterium</taxon>
    </lineage>
</organism>
<keyword id="KW-0489">Methyltransferase</keyword>
<keyword id="KW-1185">Reference proteome</keyword>
<keyword id="KW-0949">S-adenosyl-L-methionine</keyword>
<keyword id="KW-0808">Transferase</keyword>
<name>PRMC_CORGL</name>
<sequence length="279" mass="29881">MLTLGEALRDATATLERAGVASPLVDARLIAAHLLGCGPLDIALRMRDEVPAGFAAAVERRARREPLQHILGTAPMGPLDLHVGPGVFIPRPETEVLADWAVRQVAGDVEKRKIVDLCTGSGALAAYIGHALIDATLYAVELDPGAATWAQRNFDEFAPQVKLIHGDVTDPTLLAEVHGTIDLVVSNPPYVPESDDLDPEVYQDPHMAVFSGADGMDVINKMVHLIFNLLKSGGAVGIEHDDTTSDAVRQVFSQHGGFGTIEVLHDLTGRARFVTARKL</sequence>
<protein>
    <recommendedName>
        <fullName evidence="1">Release factor glutamine methyltransferase</fullName>
        <shortName evidence="1">RF MTase</shortName>
        <ecNumber evidence="1">2.1.1.297</ecNumber>
    </recommendedName>
    <alternativeName>
        <fullName evidence="1">N5-glutamine methyltransferase PrmC</fullName>
    </alternativeName>
    <alternativeName>
        <fullName evidence="1">Protein-(glutamine-N5) MTase PrmC</fullName>
    </alternativeName>
    <alternativeName>
        <fullName evidence="1">Protein-glutamine N-methyltransferase PrmC</fullName>
    </alternativeName>
</protein>
<feature type="chain" id="PRO_0000414514" description="Release factor glutamine methyltransferase">
    <location>
        <begin position="1"/>
        <end position="279"/>
    </location>
</feature>
<feature type="binding site" evidence="1">
    <location>
        <position position="141"/>
    </location>
    <ligand>
        <name>S-adenosyl-L-methionine</name>
        <dbReference type="ChEBI" id="CHEBI:59789"/>
    </ligand>
</feature>
<feature type="binding site" evidence="1">
    <location>
        <begin position="187"/>
        <end position="190"/>
    </location>
    <ligand>
        <name>substrate</name>
    </ligand>
</feature>
<feature type="binding site" evidence="1">
    <location>
        <position position="187"/>
    </location>
    <ligand>
        <name>S-adenosyl-L-methionine</name>
        <dbReference type="ChEBI" id="CHEBI:59789"/>
    </ligand>
</feature>
<gene>
    <name evidence="1" type="primary">prmC</name>
    <name type="synonym">hemK</name>
    <name type="ordered locus">Cgl1201</name>
    <name type="ordered locus">cg1356</name>
</gene>
<accession>P0DJB1</accession>
<accession>Q6M5X8</accession>
<accession>Q79NG2</accession>
<accession>Q8NR56</accession>
<dbReference type="EC" id="2.1.1.297" evidence="1"/>
<dbReference type="EMBL" id="BA000036">
    <property type="protein sequence ID" value="BAB98594.1"/>
    <property type="molecule type" value="Genomic_DNA"/>
</dbReference>
<dbReference type="EMBL" id="BX927151">
    <property type="protein sequence ID" value="CAF19905.1"/>
    <property type="molecule type" value="Genomic_DNA"/>
</dbReference>
<dbReference type="RefSeq" id="NP_600427.1">
    <property type="nucleotide sequence ID" value="NC_003450.3"/>
</dbReference>
<dbReference type="RefSeq" id="WP_011014198.1">
    <property type="nucleotide sequence ID" value="NC_006958.1"/>
</dbReference>
<dbReference type="SMR" id="P0DJB1"/>
<dbReference type="STRING" id="196627.cg1356"/>
<dbReference type="GeneID" id="1019184"/>
<dbReference type="KEGG" id="cgb:cg1356"/>
<dbReference type="KEGG" id="cgl:Cgl1201"/>
<dbReference type="PATRIC" id="fig|196627.13.peg.1181"/>
<dbReference type="eggNOG" id="COG2890">
    <property type="taxonomic scope" value="Bacteria"/>
</dbReference>
<dbReference type="HOGENOM" id="CLU_018398_4_0_11"/>
<dbReference type="OrthoDB" id="9800643at2"/>
<dbReference type="BioCyc" id="CORYNE:G18NG-10774-MONOMER"/>
<dbReference type="Proteomes" id="UP000000582">
    <property type="component" value="Chromosome"/>
</dbReference>
<dbReference type="Proteomes" id="UP000001009">
    <property type="component" value="Chromosome"/>
</dbReference>
<dbReference type="GO" id="GO:0003676">
    <property type="term" value="F:nucleic acid binding"/>
    <property type="evidence" value="ECO:0007669"/>
    <property type="project" value="InterPro"/>
</dbReference>
<dbReference type="GO" id="GO:0102559">
    <property type="term" value="F:protein-(glutamine-N5) methyltransferase activity"/>
    <property type="evidence" value="ECO:0007669"/>
    <property type="project" value="UniProtKB-EC"/>
</dbReference>
<dbReference type="GO" id="GO:0036009">
    <property type="term" value="F:protein-glutamine N-methyltransferase activity"/>
    <property type="evidence" value="ECO:0007669"/>
    <property type="project" value="UniProtKB-UniRule"/>
</dbReference>
<dbReference type="GO" id="GO:0032259">
    <property type="term" value="P:methylation"/>
    <property type="evidence" value="ECO:0007669"/>
    <property type="project" value="UniProtKB-KW"/>
</dbReference>
<dbReference type="CDD" id="cd02440">
    <property type="entry name" value="AdoMet_MTases"/>
    <property type="match status" value="1"/>
</dbReference>
<dbReference type="Gene3D" id="1.10.8.10">
    <property type="entry name" value="DNA helicase RuvA subunit, C-terminal domain"/>
    <property type="match status" value="1"/>
</dbReference>
<dbReference type="Gene3D" id="3.40.50.150">
    <property type="entry name" value="Vaccinia Virus protein VP39"/>
    <property type="match status" value="1"/>
</dbReference>
<dbReference type="HAMAP" id="MF_02126">
    <property type="entry name" value="RF_methyltr_PrmC"/>
    <property type="match status" value="1"/>
</dbReference>
<dbReference type="InterPro" id="IPR002052">
    <property type="entry name" value="DNA_methylase_N6_adenine_CS"/>
</dbReference>
<dbReference type="InterPro" id="IPR004556">
    <property type="entry name" value="HemK-like"/>
</dbReference>
<dbReference type="InterPro" id="IPR050320">
    <property type="entry name" value="N5-glutamine_MTase"/>
</dbReference>
<dbReference type="InterPro" id="IPR040758">
    <property type="entry name" value="PrmC_N"/>
</dbReference>
<dbReference type="InterPro" id="IPR019874">
    <property type="entry name" value="RF_methyltr_PrmC"/>
</dbReference>
<dbReference type="InterPro" id="IPR029063">
    <property type="entry name" value="SAM-dependent_MTases_sf"/>
</dbReference>
<dbReference type="InterPro" id="IPR007848">
    <property type="entry name" value="Small_mtfrase_dom"/>
</dbReference>
<dbReference type="NCBIfam" id="TIGR00536">
    <property type="entry name" value="hemK_fam"/>
    <property type="match status" value="1"/>
</dbReference>
<dbReference type="NCBIfam" id="TIGR03534">
    <property type="entry name" value="RF_mod_PrmC"/>
    <property type="match status" value="1"/>
</dbReference>
<dbReference type="PANTHER" id="PTHR18895">
    <property type="entry name" value="HEMK METHYLTRANSFERASE"/>
    <property type="match status" value="1"/>
</dbReference>
<dbReference type="PANTHER" id="PTHR18895:SF74">
    <property type="entry name" value="MTRF1L RELEASE FACTOR GLUTAMINE METHYLTRANSFERASE"/>
    <property type="match status" value="1"/>
</dbReference>
<dbReference type="Pfam" id="PF05175">
    <property type="entry name" value="MTS"/>
    <property type="match status" value="1"/>
</dbReference>
<dbReference type="Pfam" id="PF17827">
    <property type="entry name" value="PrmC_N"/>
    <property type="match status" value="1"/>
</dbReference>
<dbReference type="SUPFAM" id="SSF53335">
    <property type="entry name" value="S-adenosyl-L-methionine-dependent methyltransferases"/>
    <property type="match status" value="1"/>
</dbReference>
<proteinExistence type="inferred from homology"/>